<keyword id="KW-0028">Amino-acid biosynthesis</keyword>
<keyword id="KW-0067">ATP-binding</keyword>
<keyword id="KW-0963">Cytoplasm</keyword>
<keyword id="KW-0328">Glycosyltransferase</keyword>
<keyword id="KW-0368">Histidine biosynthesis</keyword>
<keyword id="KW-0460">Magnesium</keyword>
<keyword id="KW-0479">Metal-binding</keyword>
<keyword id="KW-0547">Nucleotide-binding</keyword>
<keyword id="KW-0808">Transferase</keyword>
<evidence type="ECO:0000255" key="1">
    <source>
        <dbReference type="HAMAP-Rule" id="MF_00079"/>
    </source>
</evidence>
<organism>
    <name type="scientific">Shigella boydii serotype 4 (strain Sb227)</name>
    <dbReference type="NCBI Taxonomy" id="300268"/>
    <lineage>
        <taxon>Bacteria</taxon>
        <taxon>Pseudomonadati</taxon>
        <taxon>Pseudomonadota</taxon>
        <taxon>Gammaproteobacteria</taxon>
        <taxon>Enterobacterales</taxon>
        <taxon>Enterobacteriaceae</taxon>
        <taxon>Shigella</taxon>
    </lineage>
</organism>
<proteinExistence type="inferred from homology"/>
<feature type="chain" id="PRO_1000004506" description="ATP phosphoribosyltransferase">
    <location>
        <begin position="1"/>
        <end position="299"/>
    </location>
</feature>
<sequence length="299" mass="33353">MTDNSRLRIAMQKSGRLSDDSRELLARCGIKINLHTQRLIAMAENMPIDILRVRDDDIPGLVMDGVVDLGIIGENVLEEELLNRRAQGEDPRYFTLRRLDFGGCRLSLATPVDEAWDGPLSLNGKRIATSYPHLLKRYLDQKGISFKSCLLNGSVEVAPRAGLADAICDLVSTGATLEANGLREVEVIYRSKACLIQRDGEMEESKQQLIDKLLTRIQGVIQARESKYIMMHAPTERLDEVIALLPGAERPTILPLAGDQQRVAMHMVSSETLFWETMEKLKALGASSILVLPIEKMME</sequence>
<name>HIS1_SHIBS</name>
<protein>
    <recommendedName>
        <fullName evidence="1">ATP phosphoribosyltransferase</fullName>
        <shortName evidence="1">ATP-PRT</shortName>
        <shortName evidence="1">ATP-PRTase</shortName>
        <ecNumber evidence="1">2.4.2.17</ecNumber>
    </recommendedName>
</protein>
<reference key="1">
    <citation type="journal article" date="2005" name="Nucleic Acids Res.">
        <title>Genome dynamics and diversity of Shigella species, the etiologic agents of bacillary dysentery.</title>
        <authorList>
            <person name="Yang F."/>
            <person name="Yang J."/>
            <person name="Zhang X."/>
            <person name="Chen L."/>
            <person name="Jiang Y."/>
            <person name="Yan Y."/>
            <person name="Tang X."/>
            <person name="Wang J."/>
            <person name="Xiong Z."/>
            <person name="Dong J."/>
            <person name="Xue Y."/>
            <person name="Zhu Y."/>
            <person name="Xu X."/>
            <person name="Sun L."/>
            <person name="Chen S."/>
            <person name="Nie H."/>
            <person name="Peng J."/>
            <person name="Xu J."/>
            <person name="Wang Y."/>
            <person name="Yuan Z."/>
            <person name="Wen Y."/>
            <person name="Yao Z."/>
            <person name="Shen Y."/>
            <person name="Qiang B."/>
            <person name="Hou Y."/>
            <person name="Yu J."/>
            <person name="Jin Q."/>
        </authorList>
    </citation>
    <scope>NUCLEOTIDE SEQUENCE [LARGE SCALE GENOMIC DNA]</scope>
    <source>
        <strain>Sb227</strain>
    </source>
</reference>
<accession>Q323J3</accession>
<dbReference type="EC" id="2.4.2.17" evidence="1"/>
<dbReference type="EMBL" id="CP000036">
    <property type="protein sequence ID" value="ABB65515.1"/>
    <property type="molecule type" value="Genomic_DNA"/>
</dbReference>
<dbReference type="RefSeq" id="WP_000131756.1">
    <property type="nucleotide sequence ID" value="NC_007613.1"/>
</dbReference>
<dbReference type="SMR" id="Q323J3"/>
<dbReference type="KEGG" id="sbo:SBO_0845"/>
<dbReference type="HOGENOM" id="CLU_038115_1_0_6"/>
<dbReference type="UniPathway" id="UPA00031">
    <property type="reaction ID" value="UER00006"/>
</dbReference>
<dbReference type="Proteomes" id="UP000007067">
    <property type="component" value="Chromosome"/>
</dbReference>
<dbReference type="GO" id="GO:0005737">
    <property type="term" value="C:cytoplasm"/>
    <property type="evidence" value="ECO:0007669"/>
    <property type="project" value="UniProtKB-SubCell"/>
</dbReference>
<dbReference type="GO" id="GO:0005524">
    <property type="term" value="F:ATP binding"/>
    <property type="evidence" value="ECO:0007669"/>
    <property type="project" value="UniProtKB-KW"/>
</dbReference>
<dbReference type="GO" id="GO:0003879">
    <property type="term" value="F:ATP phosphoribosyltransferase activity"/>
    <property type="evidence" value="ECO:0007669"/>
    <property type="project" value="UniProtKB-UniRule"/>
</dbReference>
<dbReference type="GO" id="GO:0000287">
    <property type="term" value="F:magnesium ion binding"/>
    <property type="evidence" value="ECO:0007669"/>
    <property type="project" value="UniProtKB-UniRule"/>
</dbReference>
<dbReference type="GO" id="GO:0000105">
    <property type="term" value="P:L-histidine biosynthetic process"/>
    <property type="evidence" value="ECO:0007669"/>
    <property type="project" value="UniProtKB-UniRule"/>
</dbReference>
<dbReference type="CDD" id="cd13592">
    <property type="entry name" value="PBP2_HisGL2"/>
    <property type="match status" value="1"/>
</dbReference>
<dbReference type="FunFam" id="3.30.70.120:FF:000002">
    <property type="entry name" value="ATP phosphoribosyltransferase"/>
    <property type="match status" value="1"/>
</dbReference>
<dbReference type="FunFam" id="3.40.190.10:FF:000008">
    <property type="entry name" value="ATP phosphoribosyltransferase"/>
    <property type="match status" value="1"/>
</dbReference>
<dbReference type="Gene3D" id="3.30.70.120">
    <property type="match status" value="1"/>
</dbReference>
<dbReference type="Gene3D" id="3.40.190.10">
    <property type="entry name" value="Periplasmic binding protein-like II"/>
    <property type="match status" value="2"/>
</dbReference>
<dbReference type="HAMAP" id="MF_00079">
    <property type="entry name" value="HisG_Long"/>
    <property type="match status" value="1"/>
</dbReference>
<dbReference type="InterPro" id="IPR020621">
    <property type="entry name" value="ATP-PRT_HisG_long"/>
</dbReference>
<dbReference type="InterPro" id="IPR013820">
    <property type="entry name" value="ATP_PRibTrfase_cat"/>
</dbReference>
<dbReference type="InterPro" id="IPR018198">
    <property type="entry name" value="ATP_PRibTrfase_CS"/>
</dbReference>
<dbReference type="InterPro" id="IPR001348">
    <property type="entry name" value="ATP_PRibTrfase_HisG"/>
</dbReference>
<dbReference type="InterPro" id="IPR013115">
    <property type="entry name" value="HisG_C"/>
</dbReference>
<dbReference type="InterPro" id="IPR011322">
    <property type="entry name" value="N-reg_PII-like_a/b"/>
</dbReference>
<dbReference type="InterPro" id="IPR015867">
    <property type="entry name" value="N-reg_PII/ATP_PRibTrfase_C"/>
</dbReference>
<dbReference type="NCBIfam" id="TIGR00070">
    <property type="entry name" value="hisG"/>
    <property type="match status" value="1"/>
</dbReference>
<dbReference type="NCBIfam" id="TIGR03455">
    <property type="entry name" value="HisG_C-term"/>
    <property type="match status" value="1"/>
</dbReference>
<dbReference type="PANTHER" id="PTHR21403:SF8">
    <property type="entry name" value="ATP PHOSPHORIBOSYLTRANSFERASE"/>
    <property type="match status" value="1"/>
</dbReference>
<dbReference type="PANTHER" id="PTHR21403">
    <property type="entry name" value="ATP PHOSPHORIBOSYLTRANSFERASE ATP-PRTASE"/>
    <property type="match status" value="1"/>
</dbReference>
<dbReference type="Pfam" id="PF01634">
    <property type="entry name" value="HisG"/>
    <property type="match status" value="1"/>
</dbReference>
<dbReference type="Pfam" id="PF08029">
    <property type="entry name" value="HisG_C"/>
    <property type="match status" value="1"/>
</dbReference>
<dbReference type="SUPFAM" id="SSF54913">
    <property type="entry name" value="GlnB-like"/>
    <property type="match status" value="1"/>
</dbReference>
<dbReference type="SUPFAM" id="SSF53850">
    <property type="entry name" value="Periplasmic binding protein-like II"/>
    <property type="match status" value="1"/>
</dbReference>
<dbReference type="PROSITE" id="PS01316">
    <property type="entry name" value="ATP_P_PHORIBOSYLTR"/>
    <property type="match status" value="1"/>
</dbReference>
<gene>
    <name evidence="1" type="primary">hisG</name>
    <name type="ordered locus">SBO_0845</name>
</gene>
<comment type="function">
    <text evidence="1">Catalyzes the condensation of ATP and 5-phosphoribose 1-diphosphate to form N'-(5'-phosphoribosyl)-ATP (PR-ATP). Has a crucial role in the pathway because the rate of histidine biosynthesis seems to be controlled primarily by regulation of HisG enzymatic activity.</text>
</comment>
<comment type="catalytic activity">
    <reaction evidence="1">
        <text>1-(5-phospho-beta-D-ribosyl)-ATP + diphosphate = 5-phospho-alpha-D-ribose 1-diphosphate + ATP</text>
        <dbReference type="Rhea" id="RHEA:18473"/>
        <dbReference type="ChEBI" id="CHEBI:30616"/>
        <dbReference type="ChEBI" id="CHEBI:33019"/>
        <dbReference type="ChEBI" id="CHEBI:58017"/>
        <dbReference type="ChEBI" id="CHEBI:73183"/>
        <dbReference type="EC" id="2.4.2.17"/>
    </reaction>
</comment>
<comment type="cofactor">
    <cofactor evidence="1">
        <name>Mg(2+)</name>
        <dbReference type="ChEBI" id="CHEBI:18420"/>
    </cofactor>
</comment>
<comment type="activity regulation">
    <text evidence="1">Feedback inhibited by histidine.</text>
</comment>
<comment type="pathway">
    <text evidence="1">Amino-acid biosynthesis; L-histidine biosynthesis; L-histidine from 5-phospho-alpha-D-ribose 1-diphosphate: step 1/9.</text>
</comment>
<comment type="subunit">
    <text evidence="1">Equilibrium between an active dimeric form, an inactive hexameric form and higher aggregates. Interconversion between the various forms is largely reversible and is influenced by the natural substrates and inhibitors of the enzyme.</text>
</comment>
<comment type="subcellular location">
    <subcellularLocation>
        <location evidence="1">Cytoplasm</location>
    </subcellularLocation>
</comment>
<comment type="similarity">
    <text evidence="1">Belongs to the ATP phosphoribosyltransferase family. Long subfamily.</text>
</comment>